<feature type="chain" id="PRO_0000097090" description="Pentatricopeptide repeat-containing protein 1, mitochondrial">
    <location>
        <begin position="1"/>
        <end position="695"/>
    </location>
</feature>
<feature type="repeat" description="PPR 1">
    <location>
        <begin position="133"/>
        <end position="169"/>
    </location>
</feature>
<feature type="repeat" description="PPR 2">
    <location>
        <begin position="170"/>
        <end position="204"/>
    </location>
</feature>
<feature type="repeat" description="PPR 3">
    <location>
        <begin position="205"/>
        <end position="243"/>
    </location>
</feature>
<feature type="repeat" description="PPR 4">
    <location>
        <begin position="244"/>
        <end position="278"/>
    </location>
</feature>
<feature type="repeat" description="PPR 5">
    <location>
        <begin position="279"/>
        <end position="315"/>
    </location>
</feature>
<feature type="repeat" description="PPR 6">
    <location>
        <begin position="316"/>
        <end position="352"/>
    </location>
</feature>
<feature type="repeat" description="PPR 5">
    <location>
        <begin position="470"/>
        <end position="485"/>
    </location>
</feature>
<feature type="repeat" description="PPR 7">
    <location>
        <begin position="517"/>
        <end position="551"/>
    </location>
</feature>
<feature type="repeat" description="PPR 8">
    <location>
        <begin position="552"/>
        <end position="583"/>
    </location>
</feature>
<feature type="repeat" description="PPR 9">
    <location>
        <begin position="584"/>
        <end position="618"/>
    </location>
</feature>
<feature type="region of interest" description="Disordered" evidence="2">
    <location>
        <begin position="391"/>
        <end position="416"/>
    </location>
</feature>
<feature type="region of interest" description="Disordered" evidence="2">
    <location>
        <begin position="672"/>
        <end position="695"/>
    </location>
</feature>
<feature type="compositionally biased region" description="Basic and acidic residues" evidence="2">
    <location>
        <begin position="685"/>
        <end position="695"/>
    </location>
</feature>
<feature type="sequence conflict" description="In Ref. 1; BAC40555 and 2; AAH04766." evidence="3" ref="1 2">
    <original>I</original>
    <variation>L</variation>
    <location>
        <position position="16"/>
    </location>
</feature>
<feature type="sequence conflict" description="In Ref. 1; BAC40555 and 2; AAH04766." evidence="3" ref="1 2">
    <original>A</original>
    <variation>E</variation>
    <location>
        <position position="40"/>
    </location>
</feature>
<feature type="sequence conflict" description="In Ref. 1; BAC40555 and 2; AAH04766." evidence="3" ref="1 2">
    <original>T</original>
    <variation>N</variation>
    <location>
        <position position="349"/>
    </location>
</feature>
<feature type="sequence conflict" description="In Ref. 1; BAC40555 and 2; AAH04766." evidence="3" ref="1 2">
    <original>S</original>
    <variation>P</variation>
    <location>
        <position position="429"/>
    </location>
</feature>
<feature type="sequence conflict" description="In Ref. 1; BAC40555 and 2; AAH04766." evidence="3" ref="1 2">
    <original>T</original>
    <variation>A</variation>
    <location>
        <position position="500"/>
    </location>
</feature>
<comment type="function">
    <text evidence="1">Mitochondrial protein implicated in negative regulation of leucine tRNA levels, as well as negative regulation of mitochondria-encoded proteins and COX activity. Also affects the 3'-processing of mitochondrial tRNAs.</text>
</comment>
<comment type="subunit">
    <text evidence="1">Associates with mitochondrial leucine tRNAs. Interacts with ELAC2.</text>
</comment>
<comment type="subcellular location">
    <subcellularLocation>
        <location evidence="1">Mitochondrion</location>
    </subcellularLocation>
    <subcellularLocation>
        <location evidence="1">Mitochondrion matrix</location>
    </subcellularLocation>
</comment>
<comment type="similarity">
    <text evidence="3">Belongs to the PTCD1 family.</text>
</comment>
<dbReference type="EMBL" id="AK088764">
    <property type="protein sequence ID" value="BAC40555.1"/>
    <property type="molecule type" value="mRNA"/>
</dbReference>
<dbReference type="EMBL" id="AK171484">
    <property type="protein sequence ID" value="BAE42485.1"/>
    <property type="molecule type" value="mRNA"/>
</dbReference>
<dbReference type="EMBL" id="BC004766">
    <property type="protein sequence ID" value="AAH04766.2"/>
    <property type="molecule type" value="mRNA"/>
</dbReference>
<dbReference type="EMBL" id="BC083097">
    <property type="protein sequence ID" value="AAH83097.1"/>
    <property type="molecule type" value="mRNA"/>
</dbReference>
<dbReference type="CCDS" id="CCDS19858.1"/>
<dbReference type="RefSeq" id="NP_598496.3">
    <property type="nucleotide sequence ID" value="NM_133735.2"/>
</dbReference>
<dbReference type="SMR" id="Q8C2E4"/>
<dbReference type="BioGRID" id="214937">
    <property type="interactions" value="3"/>
</dbReference>
<dbReference type="FunCoup" id="Q8C2E4">
    <property type="interactions" value="2594"/>
</dbReference>
<dbReference type="STRING" id="10090.ENSMUSP00000031628"/>
<dbReference type="GlyGen" id="Q8C2E4">
    <property type="glycosylation" value="1 site"/>
</dbReference>
<dbReference type="PhosphoSitePlus" id="Q8C2E4"/>
<dbReference type="jPOST" id="Q8C2E4"/>
<dbReference type="PaxDb" id="10090-ENSMUSP00000031628"/>
<dbReference type="ProteomicsDB" id="302003"/>
<dbReference type="Pumba" id="Q8C2E4"/>
<dbReference type="DNASU" id="71799"/>
<dbReference type="Ensembl" id="ENSMUST00000031628.10">
    <property type="protein sequence ID" value="ENSMUSP00000031628.10"/>
    <property type="gene ID" value="ENSMUSG00000029624.11"/>
</dbReference>
<dbReference type="GeneID" id="71799"/>
<dbReference type="KEGG" id="mmu:71799"/>
<dbReference type="UCSC" id="uc009amh.2">
    <property type="organism name" value="mouse"/>
</dbReference>
<dbReference type="AGR" id="MGI:1919049"/>
<dbReference type="CTD" id="26024"/>
<dbReference type="MGI" id="MGI:1919049">
    <property type="gene designation" value="Ptcd1"/>
</dbReference>
<dbReference type="VEuPathDB" id="HostDB:ENSMUSG00000029624"/>
<dbReference type="eggNOG" id="KOG4197">
    <property type="taxonomic scope" value="Eukaryota"/>
</dbReference>
<dbReference type="GeneTree" id="ENSGT00940000153974"/>
<dbReference type="HOGENOM" id="CLU_021952_0_0_1"/>
<dbReference type="InParanoid" id="Q8C2E4"/>
<dbReference type="OMA" id="EHPENTG"/>
<dbReference type="OrthoDB" id="185373at2759"/>
<dbReference type="PhylomeDB" id="Q8C2E4"/>
<dbReference type="TreeFam" id="TF324792"/>
<dbReference type="BioGRID-ORCS" id="71799">
    <property type="hits" value="17 hits in 79 CRISPR screens"/>
</dbReference>
<dbReference type="ChiTaRS" id="Ptcd1">
    <property type="organism name" value="mouse"/>
</dbReference>
<dbReference type="PRO" id="PR:Q8C2E4"/>
<dbReference type="Proteomes" id="UP000000589">
    <property type="component" value="Chromosome 5"/>
</dbReference>
<dbReference type="RNAct" id="Q8C2E4">
    <property type="molecule type" value="protein"/>
</dbReference>
<dbReference type="Bgee" id="ENSMUSG00000029624">
    <property type="expression patterns" value="Expressed in floor plate of midbrain and 243 other cell types or tissues"/>
</dbReference>
<dbReference type="ExpressionAtlas" id="Q8C2E4">
    <property type="expression patterns" value="baseline and differential"/>
</dbReference>
<dbReference type="GO" id="GO:0005759">
    <property type="term" value="C:mitochondrial matrix"/>
    <property type="evidence" value="ECO:0000250"/>
    <property type="project" value="UniProtKB"/>
</dbReference>
<dbReference type="GO" id="GO:0000049">
    <property type="term" value="F:tRNA binding"/>
    <property type="evidence" value="ECO:0000250"/>
    <property type="project" value="UniProtKB"/>
</dbReference>
<dbReference type="GO" id="GO:0032543">
    <property type="term" value="P:mitochondrial translation"/>
    <property type="evidence" value="ECO:0000315"/>
    <property type="project" value="CACAO"/>
</dbReference>
<dbReference type="GO" id="GO:0042780">
    <property type="term" value="P:tRNA 3'-end processing"/>
    <property type="evidence" value="ECO:0000250"/>
    <property type="project" value="UniProtKB"/>
</dbReference>
<dbReference type="FunFam" id="1.25.40.10:FF:000408">
    <property type="entry name" value="Pentatricopeptide repeat domain 1"/>
    <property type="match status" value="1"/>
</dbReference>
<dbReference type="FunFam" id="1.25.40.10:FF:000255">
    <property type="entry name" value="Pentatricopeptide repeat-containing protein 1, mitochondrial"/>
    <property type="match status" value="1"/>
</dbReference>
<dbReference type="FunFam" id="1.25.40.10:FF:000321">
    <property type="entry name" value="pentatricopeptide repeat-containing protein 1, mitochondrial isoform X1"/>
    <property type="match status" value="1"/>
</dbReference>
<dbReference type="Gene3D" id="1.25.40.10">
    <property type="entry name" value="Tetratricopeptide repeat domain"/>
    <property type="match status" value="3"/>
</dbReference>
<dbReference type="InterPro" id="IPR002885">
    <property type="entry name" value="Pentatricopeptide_rpt"/>
</dbReference>
<dbReference type="InterPro" id="IPR011990">
    <property type="entry name" value="TPR-like_helical_dom_sf"/>
</dbReference>
<dbReference type="NCBIfam" id="TIGR00756">
    <property type="entry name" value="PPR"/>
    <property type="match status" value="1"/>
</dbReference>
<dbReference type="PANTHER" id="PTHR24014">
    <property type="entry name" value="2-OXOGLUTARATE AND IRON-DEPENDENT OXYGENASE DOMAIN-CONTAINING PROTEIN 2"/>
    <property type="match status" value="1"/>
</dbReference>
<dbReference type="PANTHER" id="PTHR24014:SF6">
    <property type="entry name" value="PENTATRICOPEPTIDE REPEAT-CONTAINING PROTEIN 1, MITOCHONDRIAL"/>
    <property type="match status" value="1"/>
</dbReference>
<dbReference type="Pfam" id="PF13041">
    <property type="entry name" value="PPR_2"/>
    <property type="match status" value="1"/>
</dbReference>
<dbReference type="Pfam" id="PF13812">
    <property type="entry name" value="PPR_3"/>
    <property type="match status" value="2"/>
</dbReference>
<dbReference type="PROSITE" id="PS51375">
    <property type="entry name" value="PPR"/>
    <property type="match status" value="7"/>
</dbReference>
<protein>
    <recommendedName>
        <fullName>Pentatricopeptide repeat-containing protein 1, mitochondrial</fullName>
    </recommendedName>
</protein>
<evidence type="ECO:0000250" key="1"/>
<evidence type="ECO:0000256" key="2">
    <source>
        <dbReference type="SAM" id="MobiDB-lite"/>
    </source>
</evidence>
<evidence type="ECO:0000305" key="3"/>
<reference key="1">
    <citation type="journal article" date="2005" name="Science">
        <title>The transcriptional landscape of the mammalian genome.</title>
        <authorList>
            <person name="Carninci P."/>
            <person name="Kasukawa T."/>
            <person name="Katayama S."/>
            <person name="Gough J."/>
            <person name="Frith M.C."/>
            <person name="Maeda N."/>
            <person name="Oyama R."/>
            <person name="Ravasi T."/>
            <person name="Lenhard B."/>
            <person name="Wells C."/>
            <person name="Kodzius R."/>
            <person name="Shimokawa K."/>
            <person name="Bajic V.B."/>
            <person name="Brenner S.E."/>
            <person name="Batalov S."/>
            <person name="Forrest A.R."/>
            <person name="Zavolan M."/>
            <person name="Davis M.J."/>
            <person name="Wilming L.G."/>
            <person name="Aidinis V."/>
            <person name="Allen J.E."/>
            <person name="Ambesi-Impiombato A."/>
            <person name="Apweiler R."/>
            <person name="Aturaliya R.N."/>
            <person name="Bailey T.L."/>
            <person name="Bansal M."/>
            <person name="Baxter L."/>
            <person name="Beisel K.W."/>
            <person name="Bersano T."/>
            <person name="Bono H."/>
            <person name="Chalk A.M."/>
            <person name="Chiu K.P."/>
            <person name="Choudhary V."/>
            <person name="Christoffels A."/>
            <person name="Clutterbuck D.R."/>
            <person name="Crowe M.L."/>
            <person name="Dalla E."/>
            <person name="Dalrymple B.P."/>
            <person name="de Bono B."/>
            <person name="Della Gatta G."/>
            <person name="di Bernardo D."/>
            <person name="Down T."/>
            <person name="Engstrom P."/>
            <person name="Fagiolini M."/>
            <person name="Faulkner G."/>
            <person name="Fletcher C.F."/>
            <person name="Fukushima T."/>
            <person name="Furuno M."/>
            <person name="Futaki S."/>
            <person name="Gariboldi M."/>
            <person name="Georgii-Hemming P."/>
            <person name="Gingeras T.R."/>
            <person name="Gojobori T."/>
            <person name="Green R.E."/>
            <person name="Gustincich S."/>
            <person name="Harbers M."/>
            <person name="Hayashi Y."/>
            <person name="Hensch T.K."/>
            <person name="Hirokawa N."/>
            <person name="Hill D."/>
            <person name="Huminiecki L."/>
            <person name="Iacono M."/>
            <person name="Ikeo K."/>
            <person name="Iwama A."/>
            <person name="Ishikawa T."/>
            <person name="Jakt M."/>
            <person name="Kanapin A."/>
            <person name="Katoh M."/>
            <person name="Kawasawa Y."/>
            <person name="Kelso J."/>
            <person name="Kitamura H."/>
            <person name="Kitano H."/>
            <person name="Kollias G."/>
            <person name="Krishnan S.P."/>
            <person name="Kruger A."/>
            <person name="Kummerfeld S.K."/>
            <person name="Kurochkin I.V."/>
            <person name="Lareau L.F."/>
            <person name="Lazarevic D."/>
            <person name="Lipovich L."/>
            <person name="Liu J."/>
            <person name="Liuni S."/>
            <person name="McWilliam S."/>
            <person name="Madan Babu M."/>
            <person name="Madera M."/>
            <person name="Marchionni L."/>
            <person name="Matsuda H."/>
            <person name="Matsuzawa S."/>
            <person name="Miki H."/>
            <person name="Mignone F."/>
            <person name="Miyake S."/>
            <person name="Morris K."/>
            <person name="Mottagui-Tabar S."/>
            <person name="Mulder N."/>
            <person name="Nakano N."/>
            <person name="Nakauchi H."/>
            <person name="Ng P."/>
            <person name="Nilsson R."/>
            <person name="Nishiguchi S."/>
            <person name="Nishikawa S."/>
            <person name="Nori F."/>
            <person name="Ohara O."/>
            <person name="Okazaki Y."/>
            <person name="Orlando V."/>
            <person name="Pang K.C."/>
            <person name="Pavan W.J."/>
            <person name="Pavesi G."/>
            <person name="Pesole G."/>
            <person name="Petrovsky N."/>
            <person name="Piazza S."/>
            <person name="Reed J."/>
            <person name="Reid J.F."/>
            <person name="Ring B.Z."/>
            <person name="Ringwald M."/>
            <person name="Rost B."/>
            <person name="Ruan Y."/>
            <person name="Salzberg S.L."/>
            <person name="Sandelin A."/>
            <person name="Schneider C."/>
            <person name="Schoenbach C."/>
            <person name="Sekiguchi K."/>
            <person name="Semple C.A."/>
            <person name="Seno S."/>
            <person name="Sessa L."/>
            <person name="Sheng Y."/>
            <person name="Shibata Y."/>
            <person name="Shimada H."/>
            <person name="Shimada K."/>
            <person name="Silva D."/>
            <person name="Sinclair B."/>
            <person name="Sperling S."/>
            <person name="Stupka E."/>
            <person name="Sugiura K."/>
            <person name="Sultana R."/>
            <person name="Takenaka Y."/>
            <person name="Taki K."/>
            <person name="Tammoja K."/>
            <person name="Tan S.L."/>
            <person name="Tang S."/>
            <person name="Taylor M.S."/>
            <person name="Tegner J."/>
            <person name="Teichmann S.A."/>
            <person name="Ueda H.R."/>
            <person name="van Nimwegen E."/>
            <person name="Verardo R."/>
            <person name="Wei C.L."/>
            <person name="Yagi K."/>
            <person name="Yamanishi H."/>
            <person name="Zabarovsky E."/>
            <person name="Zhu S."/>
            <person name="Zimmer A."/>
            <person name="Hide W."/>
            <person name="Bult C."/>
            <person name="Grimmond S.M."/>
            <person name="Teasdale R.D."/>
            <person name="Liu E.T."/>
            <person name="Brusic V."/>
            <person name="Quackenbush J."/>
            <person name="Wahlestedt C."/>
            <person name="Mattick J.S."/>
            <person name="Hume D.A."/>
            <person name="Kai C."/>
            <person name="Sasaki D."/>
            <person name="Tomaru Y."/>
            <person name="Fukuda S."/>
            <person name="Kanamori-Katayama M."/>
            <person name="Suzuki M."/>
            <person name="Aoki J."/>
            <person name="Arakawa T."/>
            <person name="Iida J."/>
            <person name="Imamura K."/>
            <person name="Itoh M."/>
            <person name="Kato T."/>
            <person name="Kawaji H."/>
            <person name="Kawagashira N."/>
            <person name="Kawashima T."/>
            <person name="Kojima M."/>
            <person name="Kondo S."/>
            <person name="Konno H."/>
            <person name="Nakano K."/>
            <person name="Ninomiya N."/>
            <person name="Nishio T."/>
            <person name="Okada M."/>
            <person name="Plessy C."/>
            <person name="Shibata K."/>
            <person name="Shiraki T."/>
            <person name="Suzuki S."/>
            <person name="Tagami M."/>
            <person name="Waki K."/>
            <person name="Watahiki A."/>
            <person name="Okamura-Oho Y."/>
            <person name="Suzuki H."/>
            <person name="Kawai J."/>
            <person name="Hayashizaki Y."/>
        </authorList>
    </citation>
    <scope>NUCLEOTIDE SEQUENCE [LARGE SCALE MRNA]</scope>
    <source>
        <strain>C57BL/6J</strain>
        <strain>NOD</strain>
        <tissue>Thymus</tissue>
    </source>
</reference>
<reference key="2">
    <citation type="journal article" date="2004" name="Genome Res.">
        <title>The status, quality, and expansion of the NIH full-length cDNA project: the Mammalian Gene Collection (MGC).</title>
        <authorList>
            <consortium name="The MGC Project Team"/>
        </authorList>
    </citation>
    <scope>NUCLEOTIDE SEQUENCE [LARGE SCALE MRNA]</scope>
    <source>
        <strain>C57BL/6J</strain>
        <strain>FVB/N</strain>
        <tissue>Embryonic germ cell</tissue>
        <tissue>Mammary tumor</tissue>
    </source>
</reference>
<proteinExistence type="evidence at transcript level"/>
<organism>
    <name type="scientific">Mus musculus</name>
    <name type="common">Mouse</name>
    <dbReference type="NCBI Taxonomy" id="10090"/>
    <lineage>
        <taxon>Eukaryota</taxon>
        <taxon>Metazoa</taxon>
        <taxon>Chordata</taxon>
        <taxon>Craniata</taxon>
        <taxon>Vertebrata</taxon>
        <taxon>Euteleostomi</taxon>
        <taxon>Mammalia</taxon>
        <taxon>Eutheria</taxon>
        <taxon>Euarchontoglires</taxon>
        <taxon>Glires</taxon>
        <taxon>Rodentia</taxon>
        <taxon>Myomorpha</taxon>
        <taxon>Muroidea</taxon>
        <taxon>Muridae</taxon>
        <taxon>Murinae</taxon>
        <taxon>Mus</taxon>
        <taxon>Mus</taxon>
    </lineage>
</organism>
<sequence>MDLLRLSRLFSGPRPIGLSVLQHLDLVGSTRWTGGREGPARLRAAFCGSSSPLPLGSGNQKEMSSLCSDSSKLSTVAPQEEAEEESFGSLSGKFSSRRIFHKSTAQLYNLQLKEQGGEEEELEPRPWRGRRNTQYWYFFQCKRLIKEGKLAEALDLFERQMLKEERLQPLECNYTVLIGGCGRVGYLKKAFRLFNDMKKRDLEPSDATYTALFNVCAESPWKDSALQSALKLRQQLQARNFQLNLKTYHALLKVAAKCADLRLCLDVFKEIIQRGHAVTEETFCFLLVGCIQDKKTGFRQAMQVWRQMLSLGIKPSRHGYNLLLEAARDCGLGDPEVASRLLLTSQEETILLPPPKGRHMAGRKVQAKTVHGVSLRHVEALERQLFLEPSQKLEGPPALPEARVTSRTQPEVETTAEPGHTVALTPLASKPTHLELEVSLLSLGTLSPAVVSFGTVATPADRLALMGGLEGFLGKMTEHGLQPDIKTLTLLAEVVEPGSTAESSLLSVLDRHRVEADVTFFNTLIRKKSKLGDLEGAKALLPILAKKGIVPNLRTFCNLAIGCHRPRDGMQLLADMKKSQVSPNIHIYSTLINAALKKLDYTYLISILKDMRQNSVPVNEVVVRQLEFAAEYPPTFDRYKGKNTYLEKIDGFRAYYKQWLKAMPAEEAPHPWQEFQNKPVGDQDTTDKAGGLRDG</sequence>
<keyword id="KW-0496">Mitochondrion</keyword>
<keyword id="KW-1185">Reference proteome</keyword>
<keyword id="KW-0677">Repeat</keyword>
<keyword id="KW-0819">tRNA processing</keyword>
<gene>
    <name type="primary">Ptcd1</name>
</gene>
<name>PTCD1_MOUSE</name>
<accession>Q8C2E4</accession>
<accession>Q3TB29</accession>
<accession>Q5XK29</accession>
<accession>Q99KB2</accession>